<comment type="subcellular location">
    <subcellularLocation>
        <location evidence="3">Secreted</location>
    </subcellularLocation>
</comment>
<comment type="similarity">
    <text evidence="3">Belongs to the cysteine-rich repeat secretory protein family.</text>
</comment>
<comment type="sequence caution" evidence="3">
    <conflict type="erroneous gene model prediction">
        <sequence resource="EMBL-CDS" id="CAB45826"/>
    </conflict>
</comment>
<comment type="sequence caution" evidence="3">
    <conflict type="erroneous gene model prediction">
        <sequence resource="EMBL-CDS" id="CAB79060"/>
    </conflict>
</comment>
<protein>
    <recommendedName>
        <fullName>Cysteine-rich repeat secretory protein 47</fullName>
    </recommendedName>
</protein>
<evidence type="ECO:0000255" key="1"/>
<evidence type="ECO:0000255" key="2">
    <source>
        <dbReference type="PROSITE-ProRule" id="PRU00806"/>
    </source>
</evidence>
<evidence type="ECO:0000305" key="3"/>
<name>CRR47_ARATH</name>
<reference key="1">
    <citation type="journal article" date="1999" name="Nature">
        <title>Sequence and analysis of chromosome 4 of the plant Arabidopsis thaliana.</title>
        <authorList>
            <person name="Mayer K.F.X."/>
            <person name="Schueller C."/>
            <person name="Wambutt R."/>
            <person name="Murphy G."/>
            <person name="Volckaert G."/>
            <person name="Pohl T."/>
            <person name="Duesterhoeft A."/>
            <person name="Stiekema W."/>
            <person name="Entian K.-D."/>
            <person name="Terryn N."/>
            <person name="Harris B."/>
            <person name="Ansorge W."/>
            <person name="Brandt P."/>
            <person name="Grivell L.A."/>
            <person name="Rieger M."/>
            <person name="Weichselgartner M."/>
            <person name="de Simone V."/>
            <person name="Obermaier B."/>
            <person name="Mache R."/>
            <person name="Mueller M."/>
            <person name="Kreis M."/>
            <person name="Delseny M."/>
            <person name="Puigdomenech P."/>
            <person name="Watson M."/>
            <person name="Schmidtheini T."/>
            <person name="Reichert B."/>
            <person name="Portetelle D."/>
            <person name="Perez-Alonso M."/>
            <person name="Boutry M."/>
            <person name="Bancroft I."/>
            <person name="Vos P."/>
            <person name="Hoheisel J."/>
            <person name="Zimmermann W."/>
            <person name="Wedler H."/>
            <person name="Ridley P."/>
            <person name="Langham S.-A."/>
            <person name="McCullagh B."/>
            <person name="Bilham L."/>
            <person name="Robben J."/>
            <person name="van der Schueren J."/>
            <person name="Grymonprez B."/>
            <person name="Chuang Y.-J."/>
            <person name="Vandenbussche F."/>
            <person name="Braeken M."/>
            <person name="Weltjens I."/>
            <person name="Voet M."/>
            <person name="Bastiaens I."/>
            <person name="Aert R."/>
            <person name="Defoor E."/>
            <person name="Weitzenegger T."/>
            <person name="Bothe G."/>
            <person name="Ramsperger U."/>
            <person name="Hilbert H."/>
            <person name="Braun M."/>
            <person name="Holzer E."/>
            <person name="Brandt A."/>
            <person name="Peters S."/>
            <person name="van Staveren M."/>
            <person name="Dirkse W."/>
            <person name="Mooijman P."/>
            <person name="Klein Lankhorst R."/>
            <person name="Rose M."/>
            <person name="Hauf J."/>
            <person name="Koetter P."/>
            <person name="Berneiser S."/>
            <person name="Hempel S."/>
            <person name="Feldpausch M."/>
            <person name="Lamberth S."/>
            <person name="Van den Daele H."/>
            <person name="De Keyser A."/>
            <person name="Buysshaert C."/>
            <person name="Gielen J."/>
            <person name="Villarroel R."/>
            <person name="De Clercq R."/>
            <person name="van Montagu M."/>
            <person name="Rogers J."/>
            <person name="Cronin A."/>
            <person name="Quail M.A."/>
            <person name="Bray-Allen S."/>
            <person name="Clark L."/>
            <person name="Doggett J."/>
            <person name="Hall S."/>
            <person name="Kay M."/>
            <person name="Lennard N."/>
            <person name="McLay K."/>
            <person name="Mayes R."/>
            <person name="Pettett A."/>
            <person name="Rajandream M.A."/>
            <person name="Lyne M."/>
            <person name="Benes V."/>
            <person name="Rechmann S."/>
            <person name="Borkova D."/>
            <person name="Bloecker H."/>
            <person name="Scharfe M."/>
            <person name="Grimm M."/>
            <person name="Loehnert T.-H."/>
            <person name="Dose S."/>
            <person name="de Haan M."/>
            <person name="Maarse A.C."/>
            <person name="Schaefer M."/>
            <person name="Mueller-Auer S."/>
            <person name="Gabel C."/>
            <person name="Fuchs M."/>
            <person name="Fartmann B."/>
            <person name="Granderath K."/>
            <person name="Dauner D."/>
            <person name="Herzl A."/>
            <person name="Neumann S."/>
            <person name="Argiriou A."/>
            <person name="Vitale D."/>
            <person name="Liguori R."/>
            <person name="Piravandi E."/>
            <person name="Massenet O."/>
            <person name="Quigley F."/>
            <person name="Clabauld G."/>
            <person name="Muendlein A."/>
            <person name="Felber R."/>
            <person name="Schnabl S."/>
            <person name="Hiller R."/>
            <person name="Schmidt W."/>
            <person name="Lecharny A."/>
            <person name="Aubourg S."/>
            <person name="Chefdor F."/>
            <person name="Cooke R."/>
            <person name="Berger C."/>
            <person name="Monfort A."/>
            <person name="Casacuberta E."/>
            <person name="Gibbons T."/>
            <person name="Weber N."/>
            <person name="Vandenbol M."/>
            <person name="Bargues M."/>
            <person name="Terol J."/>
            <person name="Torres A."/>
            <person name="Perez-Perez A."/>
            <person name="Purnelle B."/>
            <person name="Bent E."/>
            <person name="Johnson S."/>
            <person name="Tacon D."/>
            <person name="Jesse T."/>
            <person name="Heijnen L."/>
            <person name="Schwarz S."/>
            <person name="Scholler P."/>
            <person name="Heber S."/>
            <person name="Francs P."/>
            <person name="Bielke C."/>
            <person name="Frishman D."/>
            <person name="Haase D."/>
            <person name="Lemcke K."/>
            <person name="Mewes H.-W."/>
            <person name="Stocker S."/>
            <person name="Zaccaria P."/>
            <person name="Bevan M."/>
            <person name="Wilson R.K."/>
            <person name="de la Bastide M."/>
            <person name="Habermann K."/>
            <person name="Parnell L."/>
            <person name="Dedhia N."/>
            <person name="Gnoj L."/>
            <person name="Schutz K."/>
            <person name="Huang E."/>
            <person name="Spiegel L."/>
            <person name="Sekhon M."/>
            <person name="Murray J."/>
            <person name="Sheet P."/>
            <person name="Cordes M."/>
            <person name="Abu-Threideh J."/>
            <person name="Stoneking T."/>
            <person name="Kalicki J."/>
            <person name="Graves T."/>
            <person name="Harmon G."/>
            <person name="Edwards J."/>
            <person name="Latreille P."/>
            <person name="Courtney L."/>
            <person name="Cloud J."/>
            <person name="Abbott A."/>
            <person name="Scott K."/>
            <person name="Johnson D."/>
            <person name="Minx P."/>
            <person name="Bentley D."/>
            <person name="Fulton B."/>
            <person name="Miller N."/>
            <person name="Greco T."/>
            <person name="Kemp K."/>
            <person name="Kramer J."/>
            <person name="Fulton L."/>
            <person name="Mardis E."/>
            <person name="Dante M."/>
            <person name="Pepin K."/>
            <person name="Hillier L.W."/>
            <person name="Nelson J."/>
            <person name="Spieth J."/>
            <person name="Ryan E."/>
            <person name="Andrews S."/>
            <person name="Geisel C."/>
            <person name="Layman D."/>
            <person name="Du H."/>
            <person name="Ali J."/>
            <person name="Berghoff A."/>
            <person name="Jones K."/>
            <person name="Drone K."/>
            <person name="Cotton M."/>
            <person name="Joshu C."/>
            <person name="Antonoiu B."/>
            <person name="Zidanic M."/>
            <person name="Strong C."/>
            <person name="Sun H."/>
            <person name="Lamar B."/>
            <person name="Yordan C."/>
            <person name="Ma P."/>
            <person name="Zhong J."/>
            <person name="Preston R."/>
            <person name="Vil D."/>
            <person name="Shekher M."/>
            <person name="Matero A."/>
            <person name="Shah R."/>
            <person name="Swaby I.K."/>
            <person name="O'Shaughnessy A."/>
            <person name="Rodriguez M."/>
            <person name="Hoffman J."/>
            <person name="Till S."/>
            <person name="Granat S."/>
            <person name="Shohdy N."/>
            <person name="Hasegawa A."/>
            <person name="Hameed A."/>
            <person name="Lodhi M."/>
            <person name="Johnson A."/>
            <person name="Chen E."/>
            <person name="Marra M.A."/>
            <person name="Martienssen R."/>
            <person name="McCombie W.R."/>
        </authorList>
    </citation>
    <scope>NUCLEOTIDE SEQUENCE [LARGE SCALE GENOMIC DNA]</scope>
    <source>
        <strain>cv. Columbia</strain>
    </source>
</reference>
<reference key="2">
    <citation type="journal article" date="2017" name="Plant J.">
        <title>Araport11: a complete reannotation of the Arabidopsis thaliana reference genome.</title>
        <authorList>
            <person name="Cheng C.Y."/>
            <person name="Krishnakumar V."/>
            <person name="Chan A.P."/>
            <person name="Thibaud-Nissen F."/>
            <person name="Schobel S."/>
            <person name="Town C.D."/>
        </authorList>
    </citation>
    <scope>GENOME REANNOTATION</scope>
    <source>
        <strain>cv. Columbia</strain>
    </source>
</reference>
<reference key="3">
    <citation type="journal article" date="2001" name="Plant Physiol.">
        <title>A superfamily of proteins with novel cysteine-rich repeats.</title>
        <authorList>
            <person name="Chen Z."/>
        </authorList>
    </citation>
    <scope>GENE FAMILY ORGANIZATION</scope>
    <scope>NOMENCLATURE</scope>
</reference>
<sequence>MSSVFGSVHILAMIAIQLLLTHSVSSLNLTNAYLHHKCSNTQGKYKQGSAFEKNLNLVLSTITSIGNFRDGFRYTEEGEDPNNVFVMFQCRGDSYWSKCPPCISTAVSGLRRRCPRNKGAIIWYDQCLLKISSVASFNKIDYENDFYLSNPNNMSDRGLFNKETSALLEKLAYKASDRNNLDGKQLVLYAAGEKRIGTKKVYAMVQCTKDLIFTKCFECLEGILRKFPQCCDGKRGGRVFGTSCNFRYELYPFLRN</sequence>
<feature type="signal peptide" evidence="1">
    <location>
        <begin position="1"/>
        <end position="26"/>
    </location>
</feature>
<feature type="chain" id="PRO_0000403943" description="Cysteine-rich repeat secretory protein 47">
    <location>
        <begin position="27"/>
        <end position="256"/>
    </location>
</feature>
<feature type="domain" description="Gnk2-homologous 1" evidence="2">
    <location>
        <begin position="33"/>
        <end position="136"/>
    </location>
</feature>
<feature type="domain" description="Gnk2-homologous 2" evidence="2">
    <location>
        <begin position="142"/>
        <end position="253"/>
    </location>
</feature>
<accession>P0CJ54</accession>
<accession>F4JVK9</accession>
<accession>Q680R8</accession>
<accession>Q9S7J6</accession>
<accession>Q9SUM6</accession>
<keyword id="KW-1185">Reference proteome</keyword>
<keyword id="KW-0677">Repeat</keyword>
<keyword id="KW-0964">Secreted</keyword>
<keyword id="KW-0732">Signal</keyword>
<organism>
    <name type="scientific">Arabidopsis thaliana</name>
    <name type="common">Mouse-ear cress</name>
    <dbReference type="NCBI Taxonomy" id="3702"/>
    <lineage>
        <taxon>Eukaryota</taxon>
        <taxon>Viridiplantae</taxon>
        <taxon>Streptophyta</taxon>
        <taxon>Embryophyta</taxon>
        <taxon>Tracheophyta</taxon>
        <taxon>Spermatophyta</taxon>
        <taxon>Magnoliopsida</taxon>
        <taxon>eudicotyledons</taxon>
        <taxon>Gunneridae</taxon>
        <taxon>Pentapetalae</taxon>
        <taxon>rosids</taxon>
        <taxon>malvids</taxon>
        <taxon>Brassicales</taxon>
        <taxon>Brassicaceae</taxon>
        <taxon>Camelineae</taxon>
        <taxon>Arabidopsis</taxon>
    </lineage>
</organism>
<gene>
    <name type="primary">CRRSP47</name>
    <name type="ordered locus">At4g20600</name>
    <name type="ORF">F9F13.250</name>
</gene>
<dbReference type="EMBL" id="AL080253">
    <property type="protein sequence ID" value="CAB45826.1"/>
    <property type="status" value="ALT_SEQ"/>
    <property type="molecule type" value="Genomic_DNA"/>
</dbReference>
<dbReference type="EMBL" id="AL161553">
    <property type="protein sequence ID" value="CAB79060.1"/>
    <property type="status" value="ALT_SEQ"/>
    <property type="molecule type" value="Genomic_DNA"/>
</dbReference>
<dbReference type="EMBL" id="CP002687">
    <property type="protein sequence ID" value="AEE84346.2"/>
    <property type="molecule type" value="Genomic_DNA"/>
</dbReference>
<dbReference type="PIR" id="T10595">
    <property type="entry name" value="T10595"/>
</dbReference>
<dbReference type="RefSeq" id="NP_001320013.1">
    <property type="nucleotide sequence ID" value="NM_001341449.1"/>
</dbReference>
<dbReference type="RefSeq" id="NP_567608.3">
    <property type="nucleotide sequence ID" value="NM_118177.3"/>
</dbReference>
<dbReference type="RefSeq" id="NP_567609.3">
    <property type="nucleotide sequence ID" value="NM_118178.3"/>
</dbReference>
<dbReference type="RefSeq" id="NP_567610.3">
    <property type="nucleotide sequence ID" value="NM_118179.3"/>
</dbReference>
<dbReference type="RefSeq" id="NP_567611.3">
    <property type="nucleotide sequence ID" value="NM_118180.3"/>
</dbReference>
<dbReference type="RefSeq" id="NP_567612.3">
    <property type="nucleotide sequence ID" value="NM_118181.3"/>
</dbReference>
<dbReference type="RefSeq" id="NP_567614.3">
    <property type="nucleotide sequence ID" value="NM_118183.3"/>
</dbReference>
<dbReference type="SMR" id="P0CJ54"/>
<dbReference type="EnsemblPlants" id="AT4G20580.1">
    <property type="protein sequence ID" value="AT4G20580.1"/>
    <property type="gene ID" value="AT4G20580"/>
</dbReference>
<dbReference type="EnsemblPlants" id="AT4G20590.1">
    <property type="protein sequence ID" value="AT4G20590.1"/>
    <property type="gene ID" value="AT4G20590"/>
</dbReference>
<dbReference type="EnsemblPlants" id="AT4G20600.1">
    <property type="protein sequence ID" value="AT4G20600.1"/>
    <property type="gene ID" value="AT4G20600"/>
</dbReference>
<dbReference type="EnsemblPlants" id="AT4G20610.1">
    <property type="protein sequence ID" value="AT4G20610.1"/>
    <property type="gene ID" value="AT4G20610"/>
</dbReference>
<dbReference type="EnsemblPlants" id="AT4G20620.1">
    <property type="protein sequence ID" value="AT4G20620.1"/>
    <property type="gene ID" value="AT4G20620"/>
</dbReference>
<dbReference type="EnsemblPlants" id="AT4G20630.1">
    <property type="protein sequence ID" value="AT4G20630.1"/>
    <property type="gene ID" value="AT4G20630"/>
</dbReference>
<dbReference type="EnsemblPlants" id="AT4G20640.1">
    <property type="protein sequence ID" value="AT4G20640.1"/>
    <property type="gene ID" value="AT4G20640"/>
</dbReference>
<dbReference type="GeneID" id="827808"/>
<dbReference type="Gramene" id="AT4G20580.1">
    <property type="protein sequence ID" value="AT4G20580.1"/>
    <property type="gene ID" value="AT4G20580"/>
</dbReference>
<dbReference type="Gramene" id="AT4G20590.1">
    <property type="protein sequence ID" value="AT4G20590.1"/>
    <property type="gene ID" value="AT4G20590"/>
</dbReference>
<dbReference type="Gramene" id="AT4G20600.1">
    <property type="protein sequence ID" value="AT4G20600.1"/>
    <property type="gene ID" value="AT4G20600"/>
</dbReference>
<dbReference type="Gramene" id="AT4G20610.1">
    <property type="protein sequence ID" value="AT4G20610.1"/>
    <property type="gene ID" value="AT4G20610"/>
</dbReference>
<dbReference type="Gramene" id="AT4G20620.1">
    <property type="protein sequence ID" value="AT4G20620.1"/>
    <property type="gene ID" value="AT4G20620"/>
</dbReference>
<dbReference type="Gramene" id="AT4G20630.1">
    <property type="protein sequence ID" value="AT4G20630.1"/>
    <property type="gene ID" value="AT4G20630"/>
</dbReference>
<dbReference type="Gramene" id="AT4G20640.1">
    <property type="protein sequence ID" value="AT4G20640.1"/>
    <property type="gene ID" value="AT4G20640"/>
</dbReference>
<dbReference type="KEGG" id="ath:AT4G20580"/>
<dbReference type="KEGG" id="ath:AT4G20590"/>
<dbReference type="KEGG" id="ath:AT4G20600"/>
<dbReference type="KEGG" id="ath:AT4G20610"/>
<dbReference type="KEGG" id="ath:AT4G20620"/>
<dbReference type="KEGG" id="ath:AT4G20630"/>
<dbReference type="KEGG" id="ath:AT4G20640"/>
<dbReference type="Araport" id="AT4G20600"/>
<dbReference type="TAIR" id="AT4G20600"/>
<dbReference type="HOGENOM" id="CLU_000288_35_0_1"/>
<dbReference type="InParanoid" id="P0CJ54"/>
<dbReference type="OMA" id="FIQVWNI"/>
<dbReference type="PRO" id="PR:P0CJ54"/>
<dbReference type="Proteomes" id="UP000006548">
    <property type="component" value="Chromosome 4"/>
</dbReference>
<dbReference type="ExpressionAtlas" id="P0CJ54">
    <property type="expression patterns" value="baseline"/>
</dbReference>
<dbReference type="GO" id="GO:0005576">
    <property type="term" value="C:extracellular region"/>
    <property type="evidence" value="ECO:0007669"/>
    <property type="project" value="UniProtKB-SubCell"/>
</dbReference>
<dbReference type="CDD" id="cd23509">
    <property type="entry name" value="Gnk2-like"/>
    <property type="match status" value="2"/>
</dbReference>
<dbReference type="FunFam" id="3.30.430.20:FF:000002">
    <property type="entry name" value="Cysteine-rich receptor-like protein kinase 10"/>
    <property type="match status" value="1"/>
</dbReference>
<dbReference type="Gene3D" id="3.30.430.20">
    <property type="entry name" value="Gnk2 domain, C-X8-C-X2-C motif"/>
    <property type="match status" value="2"/>
</dbReference>
<dbReference type="InterPro" id="IPR050581">
    <property type="entry name" value="CRR_secretory_protein"/>
</dbReference>
<dbReference type="InterPro" id="IPR002902">
    <property type="entry name" value="GNK2"/>
</dbReference>
<dbReference type="InterPro" id="IPR038408">
    <property type="entry name" value="GNK2_sf"/>
</dbReference>
<dbReference type="PANTHER" id="PTHR32411:SF54">
    <property type="entry name" value="CYSTEINE-RICH REPEAT SECRETORY PROTEIN 29-RELATED"/>
    <property type="match status" value="1"/>
</dbReference>
<dbReference type="PANTHER" id="PTHR32411">
    <property type="entry name" value="CYSTEINE-RICH REPEAT SECRETORY PROTEIN 38-RELATED"/>
    <property type="match status" value="1"/>
</dbReference>
<dbReference type="Pfam" id="PF01657">
    <property type="entry name" value="Stress-antifung"/>
    <property type="match status" value="2"/>
</dbReference>
<dbReference type="PROSITE" id="PS51473">
    <property type="entry name" value="GNK2"/>
    <property type="match status" value="2"/>
</dbReference>
<proteinExistence type="inferred from homology"/>